<feature type="chain" id="PRO_0000274814" description="Homeobox protein not2">
    <location>
        <begin position="1"/>
        <end position="233"/>
    </location>
</feature>
<feature type="DNA-binding region" description="Homeobox" evidence="2">
    <location>
        <begin position="135"/>
        <end position="194"/>
    </location>
</feature>
<feature type="region of interest" description="Disordered" evidence="3">
    <location>
        <begin position="212"/>
        <end position="233"/>
    </location>
</feature>
<feature type="compositionally biased region" description="Acidic residues" evidence="3">
    <location>
        <begin position="220"/>
        <end position="233"/>
    </location>
</feature>
<dbReference type="EMBL" id="L19566">
    <property type="protein sequence ID" value="AAA19694.1"/>
    <property type="molecule type" value="mRNA"/>
</dbReference>
<dbReference type="EMBL" id="BC123277">
    <property type="protein sequence ID" value="AAI23278.1"/>
    <property type="status" value="ALT_INIT"/>
    <property type="molecule type" value="mRNA"/>
</dbReference>
<dbReference type="PIR" id="I51438">
    <property type="entry name" value="I51438"/>
</dbReference>
<dbReference type="SMR" id="Q91770"/>
<dbReference type="DNASU" id="397703"/>
<dbReference type="GeneID" id="397703"/>
<dbReference type="KEGG" id="xla:397703"/>
<dbReference type="AGR" id="Xenbase:XB-GENE-6252631"/>
<dbReference type="CTD" id="397703"/>
<dbReference type="Xenbase" id="XB-GENE-6252631">
    <property type="gene designation" value="not.L"/>
</dbReference>
<dbReference type="OMA" id="DPACKHR"/>
<dbReference type="OrthoDB" id="6159439at2759"/>
<dbReference type="Proteomes" id="UP000186698">
    <property type="component" value="Chromosome 1L"/>
</dbReference>
<dbReference type="Bgee" id="397703">
    <property type="expression patterns" value="Expressed in egg cell and 7 other cell types or tissues"/>
</dbReference>
<dbReference type="GO" id="GO:0005634">
    <property type="term" value="C:nucleus"/>
    <property type="evidence" value="ECO:0000318"/>
    <property type="project" value="GO_Central"/>
</dbReference>
<dbReference type="GO" id="GO:0000981">
    <property type="term" value="F:DNA-binding transcription factor activity, RNA polymerase II-specific"/>
    <property type="evidence" value="ECO:0000318"/>
    <property type="project" value="GO_Central"/>
</dbReference>
<dbReference type="GO" id="GO:0000978">
    <property type="term" value="F:RNA polymerase II cis-regulatory region sequence-specific DNA binding"/>
    <property type="evidence" value="ECO:0000318"/>
    <property type="project" value="GO_Central"/>
</dbReference>
<dbReference type="GO" id="GO:0007417">
    <property type="term" value="P:central nervous system development"/>
    <property type="evidence" value="ECO:0000318"/>
    <property type="project" value="GO_Central"/>
</dbReference>
<dbReference type="GO" id="GO:0045892">
    <property type="term" value="P:negative regulation of DNA-templated transcription"/>
    <property type="evidence" value="ECO:0000250"/>
    <property type="project" value="UniProtKB"/>
</dbReference>
<dbReference type="GO" id="GO:0030182">
    <property type="term" value="P:neuron differentiation"/>
    <property type="evidence" value="ECO:0000318"/>
    <property type="project" value="GO_Central"/>
</dbReference>
<dbReference type="GO" id="GO:0014028">
    <property type="term" value="P:notochord formation"/>
    <property type="evidence" value="ECO:0000315"/>
    <property type="project" value="UniProtKB"/>
</dbReference>
<dbReference type="GO" id="GO:0006357">
    <property type="term" value="P:regulation of transcription by RNA polymerase II"/>
    <property type="evidence" value="ECO:0000318"/>
    <property type="project" value="GO_Central"/>
</dbReference>
<dbReference type="CDD" id="cd00086">
    <property type="entry name" value="homeodomain"/>
    <property type="match status" value="1"/>
</dbReference>
<dbReference type="FunFam" id="1.10.10.60:FF:000450">
    <property type="entry name" value="Homeobox protein notochord"/>
    <property type="match status" value="1"/>
</dbReference>
<dbReference type="Gene3D" id="1.10.10.60">
    <property type="entry name" value="Homeodomain-like"/>
    <property type="match status" value="1"/>
</dbReference>
<dbReference type="InterPro" id="IPR050877">
    <property type="entry name" value="EMX-VAX-Noto_Homeobox_TFs"/>
</dbReference>
<dbReference type="InterPro" id="IPR001356">
    <property type="entry name" value="HD"/>
</dbReference>
<dbReference type="InterPro" id="IPR020479">
    <property type="entry name" value="HD_metazoa"/>
</dbReference>
<dbReference type="InterPro" id="IPR017970">
    <property type="entry name" value="Homeobox_CS"/>
</dbReference>
<dbReference type="InterPro" id="IPR009057">
    <property type="entry name" value="Homeodomain-like_sf"/>
</dbReference>
<dbReference type="InterPro" id="IPR000047">
    <property type="entry name" value="HTH_motif"/>
</dbReference>
<dbReference type="PANTHER" id="PTHR24339:SF67">
    <property type="entry name" value="GNOT1 HOMEODOMAIN PROTEIN-RELATED"/>
    <property type="match status" value="1"/>
</dbReference>
<dbReference type="PANTHER" id="PTHR24339">
    <property type="entry name" value="HOMEOBOX PROTEIN EMX-RELATED"/>
    <property type="match status" value="1"/>
</dbReference>
<dbReference type="Pfam" id="PF00046">
    <property type="entry name" value="Homeodomain"/>
    <property type="match status" value="1"/>
</dbReference>
<dbReference type="PRINTS" id="PR00024">
    <property type="entry name" value="HOMEOBOX"/>
</dbReference>
<dbReference type="PRINTS" id="PR00031">
    <property type="entry name" value="HTHREPRESSR"/>
</dbReference>
<dbReference type="SMART" id="SM00389">
    <property type="entry name" value="HOX"/>
    <property type="match status" value="1"/>
</dbReference>
<dbReference type="SUPFAM" id="SSF46689">
    <property type="entry name" value="Homeodomain-like"/>
    <property type="match status" value="1"/>
</dbReference>
<dbReference type="PROSITE" id="PS00027">
    <property type="entry name" value="HOMEOBOX_1"/>
    <property type="match status" value="1"/>
</dbReference>
<dbReference type="PROSITE" id="PS50071">
    <property type="entry name" value="HOMEOBOX_2"/>
    <property type="match status" value="1"/>
</dbReference>
<name>NOT2_XENLA</name>
<accession>Q91770</accession>
<accession>Q0IH75</accession>
<keyword id="KW-0217">Developmental protein</keyword>
<keyword id="KW-0238">DNA-binding</keyword>
<keyword id="KW-0371">Homeobox</keyword>
<keyword id="KW-0539">Nucleus</keyword>
<keyword id="KW-1185">Reference proteome</keyword>
<keyword id="KW-0678">Repressor</keyword>
<keyword id="KW-0804">Transcription</keyword>
<keyword id="KW-0805">Transcription regulation</keyword>
<proteinExistence type="evidence at transcript level"/>
<protein>
    <recommendedName>
        <fullName>Homeobox protein not2</fullName>
        <shortName>Xnot-2</shortName>
        <shortName>Xnot2</shortName>
    </recommendedName>
</protein>
<evidence type="ECO:0000250" key="1">
    <source>
        <dbReference type="UniProtKB" id="Q06615"/>
    </source>
</evidence>
<evidence type="ECO:0000255" key="2">
    <source>
        <dbReference type="PROSITE-ProRule" id="PRU00108"/>
    </source>
</evidence>
<evidence type="ECO:0000256" key="3">
    <source>
        <dbReference type="SAM" id="MobiDB-lite"/>
    </source>
</evidence>
<evidence type="ECO:0000269" key="4">
    <source>
    </source>
</evidence>
<evidence type="ECO:0000269" key="5">
    <source>
    </source>
</evidence>
<evidence type="ECO:0000269" key="6">
    <source>
    </source>
</evidence>
<evidence type="ECO:0000303" key="7">
    <source>
    </source>
</evidence>
<evidence type="ECO:0000305" key="8"/>
<evidence type="ECO:0000312" key="9">
    <source>
        <dbReference type="EMBL" id="AAA19694.1"/>
    </source>
</evidence>
<evidence type="ECO:0000312" key="10">
    <source>
        <dbReference type="EMBL" id="AAI23278.1"/>
    </source>
</evidence>
<organism>
    <name type="scientific">Xenopus laevis</name>
    <name type="common">African clawed frog</name>
    <dbReference type="NCBI Taxonomy" id="8355"/>
    <lineage>
        <taxon>Eukaryota</taxon>
        <taxon>Metazoa</taxon>
        <taxon>Chordata</taxon>
        <taxon>Craniata</taxon>
        <taxon>Vertebrata</taxon>
        <taxon>Euteleostomi</taxon>
        <taxon>Amphibia</taxon>
        <taxon>Batrachia</taxon>
        <taxon>Anura</taxon>
        <taxon>Pipoidea</taxon>
        <taxon>Pipidae</taxon>
        <taxon>Xenopodinae</taxon>
        <taxon>Xenopus</taxon>
        <taxon>Xenopus</taxon>
    </lineage>
</organism>
<gene>
    <name evidence="7" type="primary">not2</name>
</gene>
<reference evidence="8 9" key="1">
    <citation type="journal article" date="1993" name="Development">
        <title>Tail formation as a continuation of gastrulation: the multiple cell populations of the Xenopus tailbud derive from the late blastopore lip.</title>
        <authorList>
            <person name="Gont L.K."/>
            <person name="Steinbeisser H."/>
            <person name="Blumberg B."/>
            <person name="De Robertis E.M."/>
        </authorList>
    </citation>
    <scope>NUCLEOTIDE SEQUENCE [MRNA]</scope>
    <scope>TISSUE SPECIFICITY</scope>
    <source>
        <tissue evidence="5">Egg</tissue>
    </source>
</reference>
<reference evidence="10" key="2">
    <citation type="submission" date="2006-09" db="EMBL/GenBank/DDBJ databases">
        <authorList>
            <consortium name="NIH - Xenopus Gene Collection (XGC) project"/>
        </authorList>
    </citation>
    <scope>NUCLEOTIDE SEQUENCE [LARGE SCALE MRNA]</scope>
    <source>
        <tissue evidence="10">Neurula</tissue>
    </source>
</reference>
<reference evidence="8" key="3">
    <citation type="journal article" date="1996" name="Dev. Biol.">
        <title>Overexpression of the homeobox gene Xnot-2 leads to notochord formation in Xenopus.</title>
        <authorList>
            <person name="Gont L.K."/>
            <person name="Fainsod A."/>
            <person name="Kim S.-H."/>
            <person name="De Robertis E.M."/>
        </authorList>
    </citation>
    <scope>FUNCTION</scope>
</reference>
<reference evidence="8" key="4">
    <citation type="journal article" date="2001" name="Development">
        <title>Role of Goosecoid, Xnot and Wnt antagonists in the maintenance of the notochord genetic programme in Xenopus gastrulae.</title>
        <authorList>
            <person name="Yasuo H."/>
            <person name="Lemaire P."/>
        </authorList>
    </citation>
    <scope>FUNCTION</scope>
</reference>
<sequence>MLHSPVFPAFGHHLADYPAMPLATDLPRTPKSSFNIDSILSRTDRPASKVSMEMPSWQPPSPPFHYSYGMVPYPPMWLIKPTVGYPNMAQAQPMRMPRGECLCPDPACKHRGLSYSHCPNGALNPLSWRTGPCKLKRIRTVFTPEQLERLEKEFLKQQYMVGTERVDLASTLNLTETQVKVWFQNRRIKWRKQSLEQKKAKLSQFGVILADSSDHTDDSRETEEEEDDVDVEL</sequence>
<comment type="function">
    <text evidence="1 4 6">Transcriptional repressor (By similarity). Plays a fundamental role in notochord formation, acting within the mesodermal region. Acts downstream of gsc and upstream of chrd and foxa4-A/pintallavis.</text>
</comment>
<comment type="subcellular location">
    <subcellularLocation>
        <location evidence="8">Nucleus</location>
    </subcellularLocation>
</comment>
<comment type="tissue specificity">
    <text evidence="5">Localized to the dorsal lip of the blastopore (Spemann organizer) during early gastrulation, after which expression continues in tissues derived from the organizer. Expressed in the notochord during mid-gastrulation, the chordoneural hinge, notochord and ventral spinal cord of the tailbud at stage 22, and finally the tip of the tail in the tadpole (stage 35).</text>
</comment>
<comment type="sequence caution" evidence="8">
    <conflict type="erroneous initiation">
        <sequence resource="EMBL-CDS" id="AAI23278"/>
    </conflict>
</comment>